<sequence>MTLIHMNVLMAFSMSLVGLLMYRSHLMSALLCLEGMMLSLFTLAALTILNSHFTLANMMPIILLVFAACEAAIGLALLVMVSNTYGTDYVQSLNLLQC</sequence>
<geneLocation type="mitochondrion"/>
<comment type="function">
    <text evidence="1">Core subunit of the mitochondrial membrane respiratory chain NADH dehydrogenase (Complex I) which catalyzes electron transfer from NADH through the respiratory chain, using ubiquinone as an electron acceptor. Part of the enzyme membrane arm which is embedded in the lipid bilayer and involved in proton translocation.</text>
</comment>
<comment type="catalytic activity">
    <reaction evidence="1">
        <text>a ubiquinone + NADH + 5 H(+)(in) = a ubiquinol + NAD(+) + 4 H(+)(out)</text>
        <dbReference type="Rhea" id="RHEA:29091"/>
        <dbReference type="Rhea" id="RHEA-COMP:9565"/>
        <dbReference type="Rhea" id="RHEA-COMP:9566"/>
        <dbReference type="ChEBI" id="CHEBI:15378"/>
        <dbReference type="ChEBI" id="CHEBI:16389"/>
        <dbReference type="ChEBI" id="CHEBI:17976"/>
        <dbReference type="ChEBI" id="CHEBI:57540"/>
        <dbReference type="ChEBI" id="CHEBI:57945"/>
        <dbReference type="EC" id="7.1.1.2"/>
    </reaction>
    <physiologicalReaction direction="left-to-right" evidence="1">
        <dbReference type="Rhea" id="RHEA:29092"/>
    </physiologicalReaction>
</comment>
<comment type="subunit">
    <text evidence="2">Core subunit of respiratory chain NADH dehydrogenase (Complex I) which is composed of 45 different subunits.</text>
</comment>
<comment type="subcellular location">
    <subcellularLocation>
        <location evidence="2">Mitochondrion inner membrane</location>
        <topology evidence="3">Multi-pass membrane protein</topology>
    </subcellularLocation>
</comment>
<comment type="similarity">
    <text evidence="4">Belongs to the complex I subunit 4L family.</text>
</comment>
<name>NU4LM_BALBO</name>
<reference key="1">
    <citation type="journal article" date="2004" name="Mol. Phylogenet. Evol.">
        <title>Phylogeny of mysticete whales based on mitochondrial and nuclear data.</title>
        <authorList>
            <person name="Rychel A.L."/>
            <person name="Reeder T.W."/>
            <person name="Berta A."/>
        </authorList>
    </citation>
    <scope>NUCLEOTIDE SEQUENCE [GENOMIC DNA]</scope>
</reference>
<reference key="2">
    <citation type="journal article" date="2005" name="Syst. Biol.">
        <title>Mitochondrial phylogenetics and evolution of mysticete whales.</title>
        <authorList>
            <person name="Sasaki T."/>
            <person name="Nikaido M."/>
            <person name="Hamilton H."/>
            <person name="Goto M."/>
            <person name="Kato H."/>
            <person name="Kanda N."/>
            <person name="Pastene L.A."/>
            <person name="Cao Y."/>
            <person name="Fordyce R.E."/>
            <person name="Hasegawa M."/>
            <person name="Okada N."/>
        </authorList>
    </citation>
    <scope>NUCLEOTIDE SEQUENCE [GENOMIC DNA]</scope>
</reference>
<organism>
    <name type="scientific">Balaenoptera borealis</name>
    <name type="common">Sei whale</name>
    <name type="synonym">Pollack whale</name>
    <dbReference type="NCBI Taxonomy" id="9768"/>
    <lineage>
        <taxon>Eukaryota</taxon>
        <taxon>Metazoa</taxon>
        <taxon>Chordata</taxon>
        <taxon>Craniata</taxon>
        <taxon>Vertebrata</taxon>
        <taxon>Euteleostomi</taxon>
        <taxon>Mammalia</taxon>
        <taxon>Eutheria</taxon>
        <taxon>Laurasiatheria</taxon>
        <taxon>Artiodactyla</taxon>
        <taxon>Whippomorpha</taxon>
        <taxon>Cetacea</taxon>
        <taxon>Mysticeti</taxon>
        <taxon>Balaenopteridae</taxon>
        <taxon>Balaenoptera</taxon>
    </lineage>
</organism>
<evidence type="ECO:0000250" key="1">
    <source>
        <dbReference type="UniProtKB" id="P03901"/>
    </source>
</evidence>
<evidence type="ECO:0000250" key="2">
    <source>
        <dbReference type="UniProtKB" id="P03902"/>
    </source>
</evidence>
<evidence type="ECO:0000255" key="3"/>
<evidence type="ECO:0000305" key="4"/>
<protein>
    <recommendedName>
        <fullName>NADH-ubiquinone oxidoreductase chain 4L</fullName>
        <ecNumber>7.1.1.2</ecNumber>
    </recommendedName>
    <alternativeName>
        <fullName>NADH dehydrogenase subunit 4L</fullName>
    </alternativeName>
</protein>
<dbReference type="EC" id="7.1.1.2"/>
<dbReference type="EMBL" id="AY398632">
    <property type="protein sequence ID" value="AAR33071.1"/>
    <property type="molecule type" value="Genomic_DNA"/>
</dbReference>
<dbReference type="EMBL" id="AP006470">
    <property type="protein sequence ID" value="BAD91728.1"/>
    <property type="molecule type" value="Genomic_DNA"/>
</dbReference>
<dbReference type="RefSeq" id="YP_220753.1">
    <property type="nucleotide sequence ID" value="NC_006929.1"/>
</dbReference>
<dbReference type="SMR" id="Q598Z5"/>
<dbReference type="GeneID" id="3337159"/>
<dbReference type="CTD" id="4539"/>
<dbReference type="GO" id="GO:0005743">
    <property type="term" value="C:mitochondrial inner membrane"/>
    <property type="evidence" value="ECO:0000250"/>
    <property type="project" value="UniProtKB"/>
</dbReference>
<dbReference type="GO" id="GO:0045271">
    <property type="term" value="C:respiratory chain complex I"/>
    <property type="evidence" value="ECO:0000250"/>
    <property type="project" value="UniProtKB"/>
</dbReference>
<dbReference type="GO" id="GO:0008137">
    <property type="term" value="F:NADH dehydrogenase (ubiquinone) activity"/>
    <property type="evidence" value="ECO:0000250"/>
    <property type="project" value="UniProtKB"/>
</dbReference>
<dbReference type="GO" id="GO:0042773">
    <property type="term" value="P:ATP synthesis coupled electron transport"/>
    <property type="evidence" value="ECO:0007669"/>
    <property type="project" value="InterPro"/>
</dbReference>
<dbReference type="FunFam" id="1.10.287.3510:FF:000002">
    <property type="entry name" value="NADH-ubiquinone oxidoreductase chain 4L"/>
    <property type="match status" value="1"/>
</dbReference>
<dbReference type="Gene3D" id="1.10.287.3510">
    <property type="match status" value="1"/>
</dbReference>
<dbReference type="InterPro" id="IPR001133">
    <property type="entry name" value="NADH_UbQ_OxRdtase_chain4L/K"/>
</dbReference>
<dbReference type="InterPro" id="IPR039428">
    <property type="entry name" value="NUOK/Mnh_C1-like"/>
</dbReference>
<dbReference type="PANTHER" id="PTHR11434:SF0">
    <property type="entry name" value="NADH-UBIQUINONE OXIDOREDUCTASE CHAIN 4L"/>
    <property type="match status" value="1"/>
</dbReference>
<dbReference type="PANTHER" id="PTHR11434">
    <property type="entry name" value="NADH-UBIQUINONE OXIDOREDUCTASE SUBUNIT ND4L"/>
    <property type="match status" value="1"/>
</dbReference>
<dbReference type="Pfam" id="PF00420">
    <property type="entry name" value="Oxidored_q2"/>
    <property type="match status" value="1"/>
</dbReference>
<gene>
    <name type="primary">MT-ND4L</name>
    <name type="synonym">MTND4L</name>
    <name type="synonym">NADH4L</name>
    <name type="synonym">ND4L</name>
</gene>
<accession>Q598Z5</accession>
<accession>Q69B68</accession>
<keyword id="KW-0249">Electron transport</keyword>
<keyword id="KW-0472">Membrane</keyword>
<keyword id="KW-0496">Mitochondrion</keyword>
<keyword id="KW-0999">Mitochondrion inner membrane</keyword>
<keyword id="KW-0520">NAD</keyword>
<keyword id="KW-0679">Respiratory chain</keyword>
<keyword id="KW-1278">Translocase</keyword>
<keyword id="KW-0812">Transmembrane</keyword>
<keyword id="KW-1133">Transmembrane helix</keyword>
<keyword id="KW-0813">Transport</keyword>
<keyword id="KW-0830">Ubiquinone</keyword>
<feature type="chain" id="PRO_0000274978" description="NADH-ubiquinone oxidoreductase chain 4L">
    <location>
        <begin position="1"/>
        <end position="98"/>
    </location>
</feature>
<feature type="transmembrane region" description="Helical" evidence="3">
    <location>
        <begin position="1"/>
        <end position="21"/>
    </location>
</feature>
<feature type="transmembrane region" description="Helical" evidence="3">
    <location>
        <begin position="29"/>
        <end position="49"/>
    </location>
</feature>
<feature type="transmembrane region" description="Helical" evidence="3">
    <location>
        <begin position="61"/>
        <end position="81"/>
    </location>
</feature>
<feature type="sequence conflict" description="In Ref. 1; AAR33071." evidence="4" ref="1">
    <original>M</original>
    <variation>V</variation>
    <location>
        <position position="14"/>
    </location>
</feature>
<proteinExistence type="inferred from homology"/>